<feature type="chain" id="PRO_0000415484" description="Hypoxanthine/guanine phosphoribosyltransferase">
    <location>
        <begin position="1"/>
        <end position="182"/>
    </location>
</feature>
<accession>Q2FSD3</accession>
<proteinExistence type="inferred from homology"/>
<dbReference type="EC" id="2.4.2.8" evidence="1"/>
<dbReference type="EMBL" id="CP000254">
    <property type="protein sequence ID" value="ABD42309.1"/>
    <property type="molecule type" value="Genomic_DNA"/>
</dbReference>
<dbReference type="RefSeq" id="WP_011449566.1">
    <property type="nucleotide sequence ID" value="NC_007796.1"/>
</dbReference>
<dbReference type="SMR" id="Q2FSD3"/>
<dbReference type="FunCoup" id="Q2FSD3">
    <property type="interactions" value="47"/>
</dbReference>
<dbReference type="STRING" id="323259.Mhun_2612"/>
<dbReference type="EnsemblBacteria" id="ABD42309">
    <property type="protein sequence ID" value="ABD42309"/>
    <property type="gene ID" value="Mhun_2612"/>
</dbReference>
<dbReference type="GeneID" id="3922322"/>
<dbReference type="KEGG" id="mhu:Mhun_2612"/>
<dbReference type="eggNOG" id="arCOG00030">
    <property type="taxonomic scope" value="Archaea"/>
</dbReference>
<dbReference type="HOGENOM" id="CLU_126376_0_0_2"/>
<dbReference type="InParanoid" id="Q2FSD3"/>
<dbReference type="OrthoDB" id="8323at2157"/>
<dbReference type="UniPathway" id="UPA00591">
    <property type="reaction ID" value="UER00648"/>
</dbReference>
<dbReference type="Proteomes" id="UP000001941">
    <property type="component" value="Chromosome"/>
</dbReference>
<dbReference type="GO" id="GO:0005737">
    <property type="term" value="C:cytoplasm"/>
    <property type="evidence" value="ECO:0007669"/>
    <property type="project" value="UniProtKB-SubCell"/>
</dbReference>
<dbReference type="GO" id="GO:0052657">
    <property type="term" value="F:guanine phosphoribosyltransferase activity"/>
    <property type="evidence" value="ECO:0007669"/>
    <property type="project" value="RHEA"/>
</dbReference>
<dbReference type="GO" id="GO:0004422">
    <property type="term" value="F:hypoxanthine phosphoribosyltransferase activity"/>
    <property type="evidence" value="ECO:0007669"/>
    <property type="project" value="UniProtKB-UniRule"/>
</dbReference>
<dbReference type="GO" id="GO:0032264">
    <property type="term" value="P:IMP salvage"/>
    <property type="evidence" value="ECO:0007669"/>
    <property type="project" value="UniProtKB-UniRule"/>
</dbReference>
<dbReference type="GO" id="GO:0006166">
    <property type="term" value="P:purine ribonucleoside salvage"/>
    <property type="evidence" value="ECO:0007669"/>
    <property type="project" value="UniProtKB-KW"/>
</dbReference>
<dbReference type="CDD" id="cd06223">
    <property type="entry name" value="PRTases_typeI"/>
    <property type="match status" value="1"/>
</dbReference>
<dbReference type="Gene3D" id="3.40.50.2020">
    <property type="match status" value="1"/>
</dbReference>
<dbReference type="HAMAP" id="MF_01467">
    <property type="entry name" value="Hypx_phosphoribosyltr"/>
    <property type="match status" value="1"/>
</dbReference>
<dbReference type="InterPro" id="IPR026597">
    <property type="entry name" value="HGPRTase-like"/>
</dbReference>
<dbReference type="InterPro" id="IPR000836">
    <property type="entry name" value="PRibTrfase_dom"/>
</dbReference>
<dbReference type="InterPro" id="IPR029057">
    <property type="entry name" value="PRTase-like"/>
</dbReference>
<dbReference type="InterPro" id="IPR050118">
    <property type="entry name" value="Pur/Pyrimidine_PRTase"/>
</dbReference>
<dbReference type="NCBIfam" id="NF040646">
    <property type="entry name" value="HPT_Archaea"/>
    <property type="match status" value="1"/>
</dbReference>
<dbReference type="NCBIfam" id="NF002635">
    <property type="entry name" value="PRK02304.1-4"/>
    <property type="match status" value="1"/>
</dbReference>
<dbReference type="PANTHER" id="PTHR43864">
    <property type="entry name" value="HYPOXANTHINE/GUANINE PHOSPHORIBOSYLTRANSFERASE"/>
    <property type="match status" value="1"/>
</dbReference>
<dbReference type="PANTHER" id="PTHR43864:SF1">
    <property type="entry name" value="XANTHINE PHOSPHORIBOSYLTRANSFERASE"/>
    <property type="match status" value="1"/>
</dbReference>
<dbReference type="Pfam" id="PF00156">
    <property type="entry name" value="Pribosyltran"/>
    <property type="match status" value="1"/>
</dbReference>
<dbReference type="SUPFAM" id="SSF53271">
    <property type="entry name" value="PRTase-like"/>
    <property type="match status" value="1"/>
</dbReference>
<dbReference type="PROSITE" id="PS00103">
    <property type="entry name" value="PUR_PYR_PR_TRANSFER"/>
    <property type="match status" value="1"/>
</dbReference>
<name>HPRT_METHJ</name>
<comment type="function">
    <text evidence="1">Catalyzes a salvage reaction resulting in the formation of IMP that is energically less costly than de novo synthesis.</text>
</comment>
<comment type="catalytic activity">
    <reaction evidence="1">
        <text>IMP + diphosphate = hypoxanthine + 5-phospho-alpha-D-ribose 1-diphosphate</text>
        <dbReference type="Rhea" id="RHEA:17973"/>
        <dbReference type="ChEBI" id="CHEBI:17368"/>
        <dbReference type="ChEBI" id="CHEBI:33019"/>
        <dbReference type="ChEBI" id="CHEBI:58017"/>
        <dbReference type="ChEBI" id="CHEBI:58053"/>
        <dbReference type="EC" id="2.4.2.8"/>
    </reaction>
</comment>
<comment type="catalytic activity">
    <reaction evidence="1">
        <text>GMP + diphosphate = guanine + 5-phospho-alpha-D-ribose 1-diphosphate</text>
        <dbReference type="Rhea" id="RHEA:25424"/>
        <dbReference type="ChEBI" id="CHEBI:16235"/>
        <dbReference type="ChEBI" id="CHEBI:33019"/>
        <dbReference type="ChEBI" id="CHEBI:58017"/>
        <dbReference type="ChEBI" id="CHEBI:58115"/>
        <dbReference type="EC" id="2.4.2.8"/>
    </reaction>
</comment>
<comment type="pathway">
    <text evidence="1">Purine metabolism; IMP biosynthesis via salvage pathway; IMP from hypoxanthine: step 1/1.</text>
</comment>
<comment type="subunit">
    <text evidence="1">Homodimer.</text>
</comment>
<comment type="subcellular location">
    <subcellularLocation>
        <location evidence="1">Cytoplasm</location>
    </subcellularLocation>
</comment>
<comment type="similarity">
    <text evidence="1">Belongs to the purine/pyrimidine phosphoribosyltransferase family. Archaeal HPRT subfamily.</text>
</comment>
<keyword id="KW-0963">Cytoplasm</keyword>
<keyword id="KW-0328">Glycosyltransferase</keyword>
<keyword id="KW-0660">Purine salvage</keyword>
<keyword id="KW-1185">Reference proteome</keyword>
<keyword id="KW-0808">Transferase</keyword>
<protein>
    <recommendedName>
        <fullName evidence="1">Hypoxanthine/guanine phosphoribosyltransferase</fullName>
        <shortName evidence="1">HGPRTase</shortName>
        <ecNumber evidence="1">2.4.2.8</ecNumber>
    </recommendedName>
</protein>
<reference key="1">
    <citation type="journal article" date="2016" name="Stand. Genomic Sci.">
        <title>Complete genome sequence of Methanospirillum hungatei type strain JF1.</title>
        <authorList>
            <person name="Gunsalus R.P."/>
            <person name="Cook L.E."/>
            <person name="Crable B."/>
            <person name="Rohlin L."/>
            <person name="McDonald E."/>
            <person name="Mouttaki H."/>
            <person name="Sieber J.R."/>
            <person name="Poweleit N."/>
            <person name="Zhou H."/>
            <person name="Lapidus A.L."/>
            <person name="Daligault H.E."/>
            <person name="Land M."/>
            <person name="Gilna P."/>
            <person name="Ivanova N."/>
            <person name="Kyrpides N."/>
            <person name="Culley D.E."/>
            <person name="McInerney M.J."/>
        </authorList>
    </citation>
    <scope>NUCLEOTIDE SEQUENCE [LARGE SCALE GENOMIC DNA]</scope>
    <source>
        <strain>ATCC 27890 / DSM 864 / NBRC 100397 / JF-1</strain>
    </source>
</reference>
<evidence type="ECO:0000255" key="1">
    <source>
        <dbReference type="HAMAP-Rule" id="MF_01467"/>
    </source>
</evidence>
<sequence length="182" mass="19869">MYPILVNSLLTCPIVKKGEYNYFVHPITDGIPDIDPGLLREIAVGMIRLLDLTDVKYIVTAEAMGIPIATAISLMTDIPVNIIRKRKYGLPGECDVCQVTGYSKGEMYINGICTGDRIVIVDDVISTGGTMNGIIKSLQSIGAEIADIGFVIKKGNPSLKLPYSYLVSIEVTDRVRIIDQSF</sequence>
<organism>
    <name type="scientific">Methanospirillum hungatei JF-1 (strain ATCC 27890 / DSM 864 / NBRC 100397 / JF-1)</name>
    <dbReference type="NCBI Taxonomy" id="323259"/>
    <lineage>
        <taxon>Archaea</taxon>
        <taxon>Methanobacteriati</taxon>
        <taxon>Methanobacteriota</taxon>
        <taxon>Stenosarchaea group</taxon>
        <taxon>Methanomicrobia</taxon>
        <taxon>Methanomicrobiales</taxon>
        <taxon>Methanospirillaceae</taxon>
        <taxon>Methanospirillum</taxon>
    </lineage>
</organism>
<gene>
    <name evidence="1" type="primary">hpt</name>
    <name type="ordered locus">Mhun_2612</name>
</gene>